<name>LSPA_YERPB</name>
<comment type="function">
    <text evidence="1">This protein specifically catalyzes the removal of signal peptides from prolipoproteins.</text>
</comment>
<comment type="catalytic activity">
    <reaction evidence="1">
        <text>Release of signal peptides from bacterial membrane prolipoproteins. Hydrolyzes -Xaa-Yaa-Zaa-|-(S,diacylglyceryl)Cys-, in which Xaa is hydrophobic (preferably Leu), and Yaa (Ala or Ser) and Zaa (Gly or Ala) have small, neutral side chains.</text>
        <dbReference type="EC" id="3.4.23.36"/>
    </reaction>
</comment>
<comment type="pathway">
    <text evidence="1">Protein modification; lipoprotein biosynthesis (signal peptide cleavage).</text>
</comment>
<comment type="subcellular location">
    <subcellularLocation>
        <location evidence="1">Cell inner membrane</location>
        <topology evidence="1">Multi-pass membrane protein</topology>
    </subcellularLocation>
</comment>
<comment type="similarity">
    <text evidence="1">Belongs to the peptidase A8 family.</text>
</comment>
<proteinExistence type="inferred from homology"/>
<reference key="1">
    <citation type="submission" date="2008-04" db="EMBL/GenBank/DDBJ databases">
        <title>Complete sequence of Yersinia pseudotuberculosis PB1/+.</title>
        <authorList>
            <person name="Copeland A."/>
            <person name="Lucas S."/>
            <person name="Lapidus A."/>
            <person name="Glavina del Rio T."/>
            <person name="Dalin E."/>
            <person name="Tice H."/>
            <person name="Bruce D."/>
            <person name="Goodwin L."/>
            <person name="Pitluck S."/>
            <person name="Munk A.C."/>
            <person name="Brettin T."/>
            <person name="Detter J.C."/>
            <person name="Han C."/>
            <person name="Tapia R."/>
            <person name="Schmutz J."/>
            <person name="Larimer F."/>
            <person name="Land M."/>
            <person name="Hauser L."/>
            <person name="Challacombe J.F."/>
            <person name="Green L."/>
            <person name="Lindler L.E."/>
            <person name="Nikolich M.P."/>
            <person name="Richardson P."/>
        </authorList>
    </citation>
    <scope>NUCLEOTIDE SEQUENCE [LARGE SCALE GENOMIC DNA]</scope>
    <source>
        <strain>PB1/+</strain>
    </source>
</reference>
<organism>
    <name type="scientific">Yersinia pseudotuberculosis serotype IB (strain PB1/+)</name>
    <dbReference type="NCBI Taxonomy" id="502801"/>
    <lineage>
        <taxon>Bacteria</taxon>
        <taxon>Pseudomonadati</taxon>
        <taxon>Pseudomonadota</taxon>
        <taxon>Gammaproteobacteria</taxon>
        <taxon>Enterobacterales</taxon>
        <taxon>Yersiniaceae</taxon>
        <taxon>Yersinia</taxon>
    </lineage>
</organism>
<evidence type="ECO:0000255" key="1">
    <source>
        <dbReference type="HAMAP-Rule" id="MF_00161"/>
    </source>
</evidence>
<dbReference type="EC" id="3.4.23.36" evidence="1"/>
<dbReference type="EMBL" id="CP001048">
    <property type="protein sequence ID" value="ACC87626.1"/>
    <property type="molecule type" value="Genomic_DNA"/>
</dbReference>
<dbReference type="RefSeq" id="WP_002210508.1">
    <property type="nucleotide sequence ID" value="NZ_CP009780.1"/>
</dbReference>
<dbReference type="SMR" id="B2K3M7"/>
<dbReference type="MEROPS" id="A08.001"/>
<dbReference type="GeneID" id="57974134"/>
<dbReference type="KEGG" id="ypb:YPTS_0642"/>
<dbReference type="PATRIC" id="fig|502801.10.peg.4324"/>
<dbReference type="UniPathway" id="UPA00665"/>
<dbReference type="GO" id="GO:0005886">
    <property type="term" value="C:plasma membrane"/>
    <property type="evidence" value="ECO:0007669"/>
    <property type="project" value="UniProtKB-SubCell"/>
</dbReference>
<dbReference type="GO" id="GO:0004190">
    <property type="term" value="F:aspartic-type endopeptidase activity"/>
    <property type="evidence" value="ECO:0007669"/>
    <property type="project" value="UniProtKB-UniRule"/>
</dbReference>
<dbReference type="GO" id="GO:0006508">
    <property type="term" value="P:proteolysis"/>
    <property type="evidence" value="ECO:0007669"/>
    <property type="project" value="UniProtKB-KW"/>
</dbReference>
<dbReference type="HAMAP" id="MF_00161">
    <property type="entry name" value="LspA"/>
    <property type="match status" value="1"/>
</dbReference>
<dbReference type="InterPro" id="IPR001872">
    <property type="entry name" value="Peptidase_A8"/>
</dbReference>
<dbReference type="NCBIfam" id="TIGR00077">
    <property type="entry name" value="lspA"/>
    <property type="match status" value="1"/>
</dbReference>
<dbReference type="PANTHER" id="PTHR33695">
    <property type="entry name" value="LIPOPROTEIN SIGNAL PEPTIDASE"/>
    <property type="match status" value="1"/>
</dbReference>
<dbReference type="PANTHER" id="PTHR33695:SF1">
    <property type="entry name" value="LIPOPROTEIN SIGNAL PEPTIDASE"/>
    <property type="match status" value="1"/>
</dbReference>
<dbReference type="Pfam" id="PF01252">
    <property type="entry name" value="Peptidase_A8"/>
    <property type="match status" value="1"/>
</dbReference>
<dbReference type="PRINTS" id="PR00781">
    <property type="entry name" value="LIPOSIGPTASE"/>
</dbReference>
<dbReference type="PROSITE" id="PS00855">
    <property type="entry name" value="SPASE_II"/>
    <property type="match status" value="1"/>
</dbReference>
<protein>
    <recommendedName>
        <fullName evidence="1">Lipoprotein signal peptidase</fullName>
        <ecNumber evidence="1">3.4.23.36</ecNumber>
    </recommendedName>
    <alternativeName>
        <fullName evidence="1">Prolipoprotein signal peptidase</fullName>
    </alternativeName>
    <alternativeName>
        <fullName evidence="1">Signal peptidase II</fullName>
        <shortName evidence="1">SPase II</shortName>
    </alternativeName>
</protein>
<keyword id="KW-0064">Aspartyl protease</keyword>
<keyword id="KW-0997">Cell inner membrane</keyword>
<keyword id="KW-1003">Cell membrane</keyword>
<keyword id="KW-0378">Hydrolase</keyword>
<keyword id="KW-0472">Membrane</keyword>
<keyword id="KW-0645">Protease</keyword>
<keyword id="KW-0812">Transmembrane</keyword>
<keyword id="KW-1133">Transmembrane helix</keyword>
<gene>
    <name evidence="1" type="primary">lspA</name>
    <name type="ordered locus">YPTS_0642</name>
</gene>
<accession>B2K3M7</accession>
<feature type="chain" id="PRO_1000097288" description="Lipoprotein signal peptidase">
    <location>
        <begin position="1"/>
        <end position="169"/>
    </location>
</feature>
<feature type="transmembrane region" description="Helical" evidence="1">
    <location>
        <begin position="4"/>
        <end position="24"/>
    </location>
</feature>
<feature type="transmembrane region" description="Helical" evidence="1">
    <location>
        <begin position="29"/>
        <end position="49"/>
    </location>
</feature>
<feature type="transmembrane region" description="Helical" evidence="1">
    <location>
        <begin position="70"/>
        <end position="90"/>
    </location>
</feature>
<feature type="transmembrane region" description="Helical" evidence="1">
    <location>
        <begin position="101"/>
        <end position="121"/>
    </location>
</feature>
<feature type="transmembrane region" description="Helical" evidence="1">
    <location>
        <begin position="137"/>
        <end position="157"/>
    </location>
</feature>
<feature type="active site" evidence="1">
    <location>
        <position position="123"/>
    </location>
</feature>
<feature type="active site" evidence="1">
    <location>
        <position position="141"/>
    </location>
</feature>
<sequence length="169" mass="18937">MNKPICSTGLRWLWLAVVVVILDISSKQWVMAHFALYESVPLIPFFNLTYAQNFGAAFSFLADKSGWQRWFFAGIAIGISVVLMVMMYRSTAKQRLINCAYALIIGGALGNLYDRLVHGAVNDFLDFYINNWHFPTFNLADVAICIGAALVIFEGFLSPVEKNAVNNDE</sequence>